<accession>Q0G819</accession>
<accession>Q86MD4</accession>
<accession>Q95002</accession>
<protein>
    <recommendedName>
        <fullName evidence="26">Serine/threonine-protein phosphatase 2B catalytic subunit</fullName>
        <ecNumber evidence="5 8 13 22 23">3.1.3.16</ecNumber>
    </recommendedName>
    <alternativeName>
        <fullName evidence="31">Abnormal chemotaxis protein 6</fullName>
    </alternativeName>
    <alternativeName>
        <fullName evidence="27">Calmodulin-dependent calcineurin subunit A</fullName>
    </alternativeName>
</protein>
<keyword id="KW-0025">Alternative splicing</keyword>
<keyword id="KW-0085">Behavior</keyword>
<keyword id="KW-0112">Calmodulin-binding</keyword>
<keyword id="KW-0966">Cell projection</keyword>
<keyword id="KW-0145">Chemotaxis</keyword>
<keyword id="KW-0963">Cytoplasm</keyword>
<keyword id="KW-0254">Endocytosis</keyword>
<keyword id="KW-0378">Hydrolase</keyword>
<keyword id="KW-0408">Iron</keyword>
<keyword id="KW-0479">Metal-binding</keyword>
<keyword id="KW-0904">Protein phosphatase</keyword>
<keyword id="KW-1185">Reference proteome</keyword>
<keyword id="KW-0862">Zinc</keyword>
<name>PP2B_CAEEL</name>
<feature type="chain" id="PRO_0000436904" description="Serine/threonine-protein phosphatase 2B catalytic subunit" evidence="26">
    <location>
        <begin position="1"/>
        <end position="542"/>
    </location>
</feature>
<feature type="region of interest" description="Disordered" evidence="6">
    <location>
        <begin position="1"/>
        <end position="33"/>
    </location>
</feature>
<feature type="region of interest" description="Catalytic" evidence="26">
    <location>
        <begin position="81"/>
        <end position="365"/>
    </location>
</feature>
<feature type="region of interest" description="Interaction with PxIxIF motif in substrate" evidence="4">
    <location>
        <begin position="352"/>
        <end position="361"/>
    </location>
</feature>
<feature type="region of interest" description="Calcineurin B binding" evidence="4">
    <location>
        <begin position="366"/>
        <end position="394"/>
    </location>
</feature>
<feature type="region of interest" description="Calmodulin-binding" evidence="4">
    <location>
        <begin position="418"/>
        <end position="432"/>
    </location>
</feature>
<feature type="region of interest" description="Autoinhibitory segment" evidence="1">
    <location>
        <begin position="433"/>
        <end position="440"/>
    </location>
</feature>
<feature type="region of interest" description="Autoinhibitory domain" evidence="4">
    <location>
        <begin position="490"/>
        <end position="512"/>
    </location>
</feature>
<feature type="region of interest" description="Disordered" evidence="6">
    <location>
        <begin position="502"/>
        <end position="542"/>
    </location>
</feature>
<feature type="short sequence motif" description="SAPNY motif" evidence="4">
    <location>
        <begin position="332"/>
        <end position="336"/>
    </location>
</feature>
<feature type="compositionally biased region" description="Polar residues" evidence="6">
    <location>
        <begin position="1"/>
        <end position="11"/>
    </location>
</feature>
<feature type="compositionally biased region" description="Low complexity" evidence="6">
    <location>
        <begin position="16"/>
        <end position="26"/>
    </location>
</feature>
<feature type="compositionally biased region" description="Low complexity" evidence="6">
    <location>
        <begin position="514"/>
        <end position="531"/>
    </location>
</feature>
<feature type="compositionally biased region" description="Pro residues" evidence="6">
    <location>
        <begin position="532"/>
        <end position="542"/>
    </location>
</feature>
<feature type="active site" description="Proton donor" evidence="2">
    <location>
        <position position="176"/>
    </location>
</feature>
<feature type="binding site" evidence="4">
    <location>
        <position position="115"/>
    </location>
    <ligand>
        <name>Fe cation</name>
        <dbReference type="ChEBI" id="CHEBI:24875"/>
    </ligand>
</feature>
<feature type="binding site" evidence="4">
    <location>
        <position position="117"/>
    </location>
    <ligand>
        <name>Fe cation</name>
        <dbReference type="ChEBI" id="CHEBI:24875"/>
    </ligand>
</feature>
<feature type="binding site" evidence="4">
    <location>
        <position position="143"/>
    </location>
    <ligand>
        <name>Fe cation</name>
        <dbReference type="ChEBI" id="CHEBI:24875"/>
    </ligand>
</feature>
<feature type="binding site" evidence="4">
    <location>
        <position position="143"/>
    </location>
    <ligand>
        <name>Zn(2+)</name>
        <dbReference type="ChEBI" id="CHEBI:29105"/>
    </ligand>
</feature>
<feature type="binding site" evidence="4">
    <location>
        <position position="175"/>
    </location>
    <ligand>
        <name>Zn(2+)</name>
        <dbReference type="ChEBI" id="CHEBI:29105"/>
    </ligand>
</feature>
<feature type="binding site" evidence="4">
    <location>
        <position position="224"/>
    </location>
    <ligand>
        <name>Zn(2+)</name>
        <dbReference type="ChEBI" id="CHEBI:29105"/>
    </ligand>
</feature>
<feature type="binding site" evidence="4">
    <location>
        <position position="306"/>
    </location>
    <ligand>
        <name>Zn(2+)</name>
        <dbReference type="ChEBI" id="CHEBI:29105"/>
    </ligand>
</feature>
<feature type="site" description="Interaction with PxVP motif in substrate" evidence="4">
    <location>
        <position position="377"/>
    </location>
</feature>
<feature type="splice variant" id="VSP_058441" description="In isoform b.">
    <original>GVGSARKEVIRHKIRAIGKMARAFSVLRHESESVLQLK</original>
    <variation>ADGKWIFPYPPHTGDVCLTIRFSFIFSLIFYQTFFGTP</variation>
    <location>
        <begin position="413"/>
        <end position="450"/>
    </location>
</feature>
<feature type="splice variant" id="VSP_058442" description="In isoform a." evidence="26">
    <original>H</original>
    <variation>E</variation>
    <location>
        <position position="441"/>
    </location>
</feature>
<feature type="splice variant" id="VSP_058443" description="In isoform a.">
    <original>QLKGLNAGGKLPQGALSEGRTGLNAAYRIEQS</original>
    <variation>ALKGLTPTGALPMGTLQGGSRGVRE</variation>
    <location>
        <begin position="448"/>
        <end position="479"/>
    </location>
</feature>
<feature type="splice variant" id="VSP_058444" description="In isoform b." evidence="26">
    <location>
        <begin position="451"/>
        <end position="542"/>
    </location>
</feature>
<feature type="mutagenesis site" description="In p675; impaired thermotaxis and chemotaxis towards NaCl, hypersensitivity to low osmotic conditions, enhanced olfactory adaptation to isoamyl alcohol. Slow growth rate and body is smaller and slender with a transparent appearance resulting from a thinner cuticle. Reduced brood size associated with egg retention. Partially resistant to serotonin-induced egg laying. Increased susceptibility to nicotine-mediated paralysis. Impaired mating behavior and reduced localization of pkd-2 to neuronal cilium. Impaired CO2 avoidance. Impaired coelomocyte endocytosis, apical endocytosis in intestine and recycling of synaptic vesicles at synapses." evidence="7 9 11 13 16 19 21">
    <original>D</original>
    <variation>N</variation>
    <location>
        <position position="259"/>
    </location>
</feature>
<organism evidence="28">
    <name type="scientific">Caenorhabditis elegans</name>
    <dbReference type="NCBI Taxonomy" id="6239"/>
    <lineage>
        <taxon>Eukaryota</taxon>
        <taxon>Metazoa</taxon>
        <taxon>Ecdysozoa</taxon>
        <taxon>Nematoda</taxon>
        <taxon>Chromadorea</taxon>
        <taxon>Rhabditida</taxon>
        <taxon>Rhabditina</taxon>
        <taxon>Rhabditomorpha</taxon>
        <taxon>Rhabditoidea</taxon>
        <taxon>Rhabditidae</taxon>
        <taxon>Peloderinae</taxon>
        <taxon>Caenorhabditis</taxon>
    </lineage>
</organism>
<reference evidence="28" key="1">
    <citation type="journal article" date="1998" name="Science">
        <title>Genome sequence of the nematode C. elegans: a platform for investigating biology.</title>
        <authorList>
            <consortium name="The C. elegans sequencing consortium"/>
        </authorList>
    </citation>
    <scope>NUCLEOTIDE SEQUENCE [LARGE SCALE GENOMIC DNA]</scope>
    <source>
        <strain evidence="28">Bristol N2</strain>
    </source>
</reference>
<reference evidence="26" key="2">
    <citation type="journal article" date="2002" name="Mol. Biol. Cell">
        <title>Calcineurin, a calcium/calmodulin-dependent protein phosphatase, is involved in movement, fertility, egg laying, and growth in Caenorhabditis elegans.</title>
        <authorList>
            <person name="Bandyopadhyay J."/>
            <person name="Lee J."/>
            <person name="Lee J."/>
            <person name="Lee J.I."/>
            <person name="Yu J.-R."/>
            <person name="Jee C."/>
            <person name="Cho J.-H."/>
            <person name="Jung S."/>
            <person name="Lee M.H."/>
            <person name="Zannoni S."/>
            <person name="Singson A."/>
            <person name="Kim D."/>
            <person name="Koo H.-S."/>
            <person name="Ahnn J."/>
        </authorList>
    </citation>
    <scope>FUNCTION</scope>
    <scope>CATALYTIC ACTIVITY</scope>
    <scope>ACTIVITY REGULATION</scope>
    <scope>INTERACTION WITH CNB-1</scope>
    <scope>SUBCELLULAR LOCATION</scope>
    <scope>TISSUE SPECIFICITY</scope>
</reference>
<reference evidence="26" key="3">
    <citation type="journal article" date="2002" name="Neuron">
        <title>Negative regulation and gain control of sensory neurons by the C. elegans calcineurin TAX-6.</title>
        <authorList>
            <person name="Kuhara A."/>
            <person name="Inada H."/>
            <person name="Katsura I."/>
            <person name="Mori I."/>
        </authorList>
    </citation>
    <scope>FUNCTION</scope>
    <scope>SUBCELLULAR LOCATION</scope>
    <scope>TISSUE SPECIFICITY</scope>
    <scope>MUTAGENESIS OF ASP-259</scope>
</reference>
<reference evidence="26" key="4">
    <citation type="journal article" date="2003" name="J. Mol. Biol.">
        <title>The Caenorhabditis elegans homologue of Down syndrome critical region 1, RCN-1, inhibits multiple functions of the phosphatase calcineurin.</title>
        <authorList>
            <person name="Lee J.I."/>
            <person name="Dhakal B.K."/>
            <person name="Lee J."/>
            <person name="Bandyopadhyay J."/>
            <person name="Jeong S.Y."/>
            <person name="Eom S.H."/>
            <person name="Kim D.H."/>
            <person name="Ahnn J."/>
        </authorList>
    </citation>
    <scope>FUNCTION</scope>
    <scope>INTERACTION WITH RCAN-1</scope>
    <scope>MUTAGENESIS OF ASP-259</scope>
</reference>
<reference evidence="26" key="5">
    <citation type="journal article" date="2004" name="J. Mol. Biol.">
        <title>Opposing functions of calcineurin and CaMKII regulate G-protein signaling in egg-laying behavior of C.elegans.</title>
        <authorList>
            <person name="Lee J."/>
            <person name="Jee C."/>
            <person name="Song H.O."/>
            <person name="Bandyopadhyay J."/>
            <person name="Lee J.I."/>
            <person name="Yu J.R."/>
            <person name="Lee J."/>
            <person name="Park B.J."/>
            <person name="Ahnn J."/>
        </authorList>
    </citation>
    <scope>FUNCTION</scope>
    <scope>TISSUE SPECIFICITY</scope>
    <scope>DEVELOPMENTAL STAGE</scope>
</reference>
<reference evidence="26" key="6">
    <citation type="journal article" date="2005" name="EMBO J.">
        <title>Identification and characterization of novel nicotinic receptor-associated proteins in Caenorhabditis elegans.</title>
        <authorList>
            <person name="Gottschalk A."/>
            <person name="Almedom R.B."/>
            <person name="Schedletzky T."/>
            <person name="Anderson S.D."/>
            <person name="Yates J.R. III"/>
            <person name="Schafer W.R."/>
        </authorList>
    </citation>
    <scope>FUNCTION</scope>
    <scope>MUTAGENESIS OF ASP-259</scope>
</reference>
<reference evidence="26" key="7">
    <citation type="journal article" date="2005" name="J. Mol. Biol.">
        <title>Calcineurin regulates enteric muscle contraction through EXP-1, excitatory GABA-gated channel, in C. elegans.</title>
        <authorList>
            <person name="Lee J."/>
            <person name="Song H.O."/>
            <person name="Jee C."/>
            <person name="Vanoaica L."/>
            <person name="Ahnn J."/>
        </authorList>
    </citation>
    <scope>FUNCTION</scope>
    <scope>INTERACTION WITH EXP-1</scope>
    <scope>TISSUE SPECIFICITY</scope>
</reference>
<reference evidence="26" key="8">
    <citation type="journal article" date="2006" name="Mol. Biol. Cell">
        <title>Casein kinase II and calcineurin modulate TRPP function and ciliary localization.</title>
        <authorList>
            <person name="Hu J."/>
            <person name="Bae Y.-K."/>
            <person name="Knobel K.M."/>
            <person name="Barr M.M."/>
        </authorList>
    </citation>
    <scope>FUNCTION</scope>
    <scope>CATALYTIC ACTIVITY</scope>
    <scope>SUBCELLULAR LOCATION</scope>
    <scope>TISSUE SPECIFICITY</scope>
    <scope>MUTAGENESIS OF ASP-259</scope>
</reference>
<reference evidence="26" key="9">
    <citation type="journal article" date="2007" name="Biochem. Biophys. Res. Commun.">
        <title>Calcineurin interacts with KIN-29, a Ser/Thr kinase, in Caenorhabditis elegans.</title>
        <authorList>
            <person name="Singaravelu G."/>
            <person name="Song H.O."/>
            <person name="Ji Y.J."/>
            <person name="Jee C."/>
            <person name="Park B.J."/>
            <person name="Ahnn J."/>
        </authorList>
    </citation>
    <scope>FUNCTION</scope>
    <scope>INTERACTION WITH KIN-29</scope>
</reference>
<reference evidence="26" key="10">
    <citation type="journal article" date="2008" name="BMB Rep.">
        <title>Novel calcineurin interacting protein-2: the functional characterization of CNP-2 in Caenorhabditis elegans.</title>
        <authorList>
            <person name="Xianglan C."/>
            <person name="Ko K.M."/>
            <person name="Singaravelu G."/>
            <person name="Ahnn J."/>
        </authorList>
    </citation>
    <scope>INTERACTION WITH CNP-2</scope>
</reference>
<reference key="11">
    <citation type="journal article" date="2008" name="Cell Calcium">
        <title>Ca(2+)/Calmodulin-binding proteins from the C. elegans proteome.</title>
        <authorList>
            <person name="Shen X."/>
            <person name="Valencia C.A."/>
            <person name="Gao W."/>
            <person name="Cotten S.W."/>
            <person name="Dong B."/>
            <person name="Huang B.C."/>
            <person name="Liu R."/>
        </authorList>
    </citation>
    <scope>INTERACTION WITH CMD-1</scope>
</reference>
<reference evidence="26" key="12">
    <citation type="journal article" date="2008" name="Proc. Natl. Acad. Sci. U.S.A.">
        <title>Acute carbon dioxide avoidance in Caenorhabditis elegans.</title>
        <authorList>
            <person name="Hallem E.A."/>
            <person name="Sternberg P.W."/>
        </authorList>
    </citation>
    <scope>FUNCTION</scope>
    <scope>MUTAGENESIS OF ASP-259</scope>
</reference>
<reference evidence="26" key="13">
    <citation type="journal article" date="2009" name="Autophagy">
        <title>Autophagy genes mediate the effect of calcineurin on life span in C. elegans.</title>
        <authorList>
            <person name="Dwivedi M."/>
            <person name="Song H.O."/>
            <person name="Ahnn J."/>
        </authorList>
    </citation>
    <scope>FUNCTION</scope>
</reference>
<reference evidence="26" key="14">
    <citation type="journal article" date="2010" name="Mol. Cells">
        <title>Calcineurin regulates coelomocyte endocytosis via DYN-1 and CUP-4 in Caenorhabditis elegans.</title>
        <authorList>
            <person name="Song H.O."/>
            <person name="Lee J."/>
            <person name="Ji Y.J."/>
            <person name="Dwivedi M."/>
            <person name="Cho J.H."/>
            <person name="Park B.J."/>
            <person name="Ahnn J."/>
        </authorList>
    </citation>
    <scope>FUNCTION</scope>
    <scope>INTERACTION WITH DYN-1</scope>
    <scope>MUTAGENESIS OF ASP-259</scope>
</reference>
<reference evidence="26" key="15">
    <citation type="journal article" date="2011" name="BMB Rep.">
        <title>Calcineurin may regulate multiple endocytic processes in C. elegans.</title>
        <authorList>
            <person name="Song H.O."/>
            <person name="Ahnn J."/>
        </authorList>
    </citation>
    <scope>FUNCTION</scope>
    <scope>MUTAGENESIS OF ASP-259</scope>
</reference>
<reference evidence="26" key="16">
    <citation type="journal article" date="2011" name="Nature">
        <title>Lifespan extension induced by AMPK and calcineurin is mediated by CRTC-1 and CREB.</title>
        <authorList>
            <person name="Mair W."/>
            <person name="Morantte I."/>
            <person name="Rodrigues A.P."/>
            <person name="Manning G."/>
            <person name="Montminy M."/>
            <person name="Shaw R.J."/>
            <person name="Dillin A."/>
        </authorList>
    </citation>
    <scope>FUNCTION</scope>
    <scope>DISRUPTION PHENOTYPE</scope>
</reference>
<reference evidence="26" key="17">
    <citation type="journal article" date="2012" name="J. Mol. Biol.">
        <title>CNP-1 (ARRD-17), a novel substrate of calcineurin, is critical for modulation of egg-laying and locomotion in response to food and lysine sensation in Caenorhabditis elegans.</title>
        <authorList>
            <person name="Jee C."/>
            <person name="Choi T.W."/>
            <person name="Kalichamy K."/>
            <person name="Yee J.Z."/>
            <person name="Song H.O."/>
            <person name="Ji Y.J."/>
            <person name="Lee J."/>
            <person name="Lee J.I."/>
            <person name="L'Etoile N.D."/>
            <person name="Ahnn J."/>
            <person name="Lee S.K."/>
        </authorList>
    </citation>
    <scope>FUNCTION</scope>
    <scope>CATALYTIC ACTIVITY</scope>
    <scope>INTERACTION WITH ARRD-17</scope>
</reference>
<reference evidence="26" key="18">
    <citation type="journal article" date="2013" name="Elife">
        <title>CAMKII and Calcineurin regulate the lifespan of Caenorhabditis elegans through the FOXO transcription factor DAF-16.</title>
        <authorList>
            <person name="Tao L."/>
            <person name="Xie Q."/>
            <person name="Ding Y.H."/>
            <person name="Li S.T."/>
            <person name="Peng S."/>
            <person name="Zhang Y.P."/>
            <person name="Tan D."/>
            <person name="Yuan Z."/>
            <person name="Dong M.Q."/>
        </authorList>
    </citation>
    <scope>FUNCTION</scope>
    <scope>CATALYTIC ACTIVITY</scope>
    <scope>INTERACTION WITH DAF-16</scope>
    <scope>DISRUPTION PHENOTYPE</scope>
</reference>
<reference key="19">
    <citation type="journal article" date="2015" name="J. Mol. Biol.">
        <title>Regulator of calcineurin (rcan-1) regulates thermotaxis behavior in Caenorhabditis elegans.</title>
        <authorList>
            <person name="Li W."/>
            <person name="Bell H.W."/>
            <person name="Ahnn J."/>
            <person name="Lee S.K."/>
        </authorList>
    </citation>
    <scope>FUNCTION</scope>
    <scope>INTERACTION WITH RCAN-1</scope>
    <scope>DISRUPTION PHENOTYPE</scope>
</reference>
<reference key="20">
    <citation type="journal article" date="2016" name="Mol. Cells">
        <title>Allele-specific phenotype suggests a possible stimulatory activity of rcan-1 on calcineurin in Caenorhabditis elegans.</title>
        <authorList>
            <person name="Li W."/>
            <person name="Choi T.W."/>
            <person name="Ahnn J."/>
            <person name="Lee S.K."/>
        </authorList>
    </citation>
    <scope>FUNCTION</scope>
    <scope>DISRUPTION PHENOTYPE</scope>
</reference>
<proteinExistence type="evidence at protein level"/>
<dbReference type="EC" id="3.1.3.16" evidence="5 8 13 22 23"/>
<dbReference type="EMBL" id="BX284604">
    <property type="protein sequence ID" value="CAB02719.1"/>
    <property type="molecule type" value="Genomic_DNA"/>
</dbReference>
<dbReference type="EMBL" id="BX284604">
    <property type="protein sequence ID" value="CAD88213.2"/>
    <property type="molecule type" value="Genomic_DNA"/>
</dbReference>
<dbReference type="EMBL" id="BX284604">
    <property type="protein sequence ID" value="CAL36491.2"/>
    <property type="molecule type" value="Genomic_DNA"/>
</dbReference>
<dbReference type="PIR" id="T18864">
    <property type="entry name" value="T18864"/>
</dbReference>
<dbReference type="RefSeq" id="NP_001021292.1">
    <property type="nucleotide sequence ID" value="NM_001026121.1"/>
</dbReference>
<dbReference type="RefSeq" id="NP_001021293.2">
    <property type="nucleotide sequence ID" value="NM_001026122.3"/>
</dbReference>
<dbReference type="RefSeq" id="NP_001076658.2">
    <molecule id="Q0G819-1"/>
    <property type="nucleotide sequence ID" value="NM_001083189.5"/>
</dbReference>
<dbReference type="RefSeq" id="NP_001379183.1">
    <molecule id="Q0G819-2"/>
    <property type="nucleotide sequence ID" value="NM_001392391.1"/>
</dbReference>
<dbReference type="SMR" id="Q0G819"/>
<dbReference type="ComplexPortal" id="CPX-1128">
    <property type="entry name" value="Calcineurin-Calmodulin complex"/>
</dbReference>
<dbReference type="DIP" id="DIP-25135N"/>
<dbReference type="FunCoup" id="Q0G819">
    <property type="interactions" value="1607"/>
</dbReference>
<dbReference type="IntAct" id="Q0G819">
    <property type="interactions" value="5"/>
</dbReference>
<dbReference type="MINT" id="Q0G819"/>
<dbReference type="STRING" id="6239.C02F4.2b.1"/>
<dbReference type="PaxDb" id="6239-C02F4.2c"/>
<dbReference type="PeptideAtlas" id="Q0G819"/>
<dbReference type="EnsemblMetazoa" id="C02F4.2a.1">
    <molecule id="Q0G819-2"/>
    <property type="protein sequence ID" value="C02F4.2a.1"/>
    <property type="gene ID" value="WBGene00006527"/>
</dbReference>
<dbReference type="EnsemblMetazoa" id="C02F4.2a.2">
    <molecule id="Q0G819-2"/>
    <property type="protein sequence ID" value="C02F4.2a.2"/>
    <property type="gene ID" value="WBGene00006527"/>
</dbReference>
<dbReference type="EnsemblMetazoa" id="C02F4.2b.1">
    <property type="protein sequence ID" value="C02F4.2b.1"/>
    <property type="gene ID" value="WBGene00006527"/>
</dbReference>
<dbReference type="EnsemblMetazoa" id="C02F4.2c.1">
    <molecule id="Q0G819-1"/>
    <property type="protein sequence ID" value="C02F4.2c.1"/>
    <property type="gene ID" value="WBGene00006527"/>
</dbReference>
<dbReference type="EnsemblMetazoa" id="C02F4.2c.2">
    <molecule id="Q0G819-1"/>
    <property type="protein sequence ID" value="C02F4.2c.2"/>
    <property type="gene ID" value="WBGene00006527"/>
</dbReference>
<dbReference type="GeneID" id="177943"/>
<dbReference type="KEGG" id="cel:CELE_C02F4.2"/>
<dbReference type="UCSC" id="C02F4.2c">
    <molecule id="Q0G819-1"/>
    <property type="organism name" value="c. elegans"/>
</dbReference>
<dbReference type="AGR" id="WB:WBGene00006527"/>
<dbReference type="CTD" id="177943"/>
<dbReference type="WormBase" id="C02F4.2a">
    <molecule id="Q0G819-2"/>
    <property type="protein sequence ID" value="CE07853"/>
    <property type="gene ID" value="WBGene00006527"/>
    <property type="gene designation" value="tax-6"/>
</dbReference>
<dbReference type="WormBase" id="C02F4.2b">
    <molecule id="Q0G819-3"/>
    <property type="protein sequence ID" value="CE52450"/>
    <property type="gene ID" value="WBGene00006527"/>
    <property type="gene designation" value="tax-6"/>
</dbReference>
<dbReference type="WormBase" id="C02F4.2c">
    <molecule id="Q0G819-1"/>
    <property type="protein sequence ID" value="CE46586"/>
    <property type="gene ID" value="WBGene00006527"/>
    <property type="gene designation" value="tax-6"/>
</dbReference>
<dbReference type="eggNOG" id="KOG0375">
    <property type="taxonomic scope" value="Eukaryota"/>
</dbReference>
<dbReference type="GeneTree" id="ENSGT00940000154115"/>
<dbReference type="InParanoid" id="Q0G819"/>
<dbReference type="OMA" id="PSHGLMC"/>
<dbReference type="OrthoDB" id="5593063at2759"/>
<dbReference type="PhylomeDB" id="Q0G819"/>
<dbReference type="Reactome" id="R-CEL-2871809">
    <property type="pathway name" value="FCERI mediated Ca+2 mobilization"/>
</dbReference>
<dbReference type="Reactome" id="R-CEL-4086398">
    <property type="pathway name" value="Ca2+ pathway"/>
</dbReference>
<dbReference type="Reactome" id="R-CEL-5607763">
    <property type="pathway name" value="CLEC7A (Dectin-1) induces NFAT activation"/>
</dbReference>
<dbReference type="PRO" id="PR:Q0G819"/>
<dbReference type="Proteomes" id="UP000001940">
    <property type="component" value="Chromosome IV"/>
</dbReference>
<dbReference type="Bgee" id="WBGene00006527">
    <property type="expression patterns" value="Expressed in pharyngeal muscle cell (C elegans) and 3 other cell types or tissues"/>
</dbReference>
<dbReference type="GO" id="GO:0030424">
    <property type="term" value="C:axon"/>
    <property type="evidence" value="ECO:0000314"/>
    <property type="project" value="WormBase"/>
</dbReference>
<dbReference type="GO" id="GO:0005955">
    <property type="term" value="C:calcineurin complex"/>
    <property type="evidence" value="ECO:0000318"/>
    <property type="project" value="GO_Central"/>
</dbReference>
<dbReference type="GO" id="GO:0005737">
    <property type="term" value="C:cytoplasm"/>
    <property type="evidence" value="ECO:0000314"/>
    <property type="project" value="WormBase"/>
</dbReference>
<dbReference type="GO" id="GO:0030425">
    <property type="term" value="C:dendrite"/>
    <property type="evidence" value="ECO:0000314"/>
    <property type="project" value="WormBase"/>
</dbReference>
<dbReference type="GO" id="GO:0043025">
    <property type="term" value="C:neuronal cell body"/>
    <property type="evidence" value="ECO:0000314"/>
    <property type="project" value="WormBase"/>
</dbReference>
<dbReference type="GO" id="GO:0097730">
    <property type="term" value="C:non-motile cilium"/>
    <property type="evidence" value="ECO:0000314"/>
    <property type="project" value="WormBase"/>
</dbReference>
<dbReference type="GO" id="GO:0005634">
    <property type="term" value="C:nucleus"/>
    <property type="evidence" value="ECO:0000314"/>
    <property type="project" value="WormBase"/>
</dbReference>
<dbReference type="GO" id="GO:0043204">
    <property type="term" value="C:perikaryon"/>
    <property type="evidence" value="ECO:0007669"/>
    <property type="project" value="UniProtKB-SubCell"/>
</dbReference>
<dbReference type="GO" id="GO:0005509">
    <property type="term" value="F:calcium ion binding"/>
    <property type="evidence" value="ECO:0000314"/>
    <property type="project" value="WormBase"/>
</dbReference>
<dbReference type="GO" id="GO:0005516">
    <property type="term" value="F:calmodulin binding"/>
    <property type="evidence" value="ECO:0000318"/>
    <property type="project" value="GO_Central"/>
</dbReference>
<dbReference type="GO" id="GO:0033192">
    <property type="term" value="F:calmodulin-dependent protein phosphatase activity"/>
    <property type="evidence" value="ECO:0000314"/>
    <property type="project" value="WormBase"/>
</dbReference>
<dbReference type="GO" id="GO:0004721">
    <property type="term" value="F:phosphoprotein phosphatase activity"/>
    <property type="evidence" value="ECO:0000314"/>
    <property type="project" value="WormBase"/>
</dbReference>
<dbReference type="GO" id="GO:0097720">
    <property type="term" value="P:calcineurin-mediated signaling"/>
    <property type="evidence" value="ECO:0000318"/>
    <property type="project" value="GO_Central"/>
</dbReference>
<dbReference type="GO" id="GO:0019722">
    <property type="term" value="P:calcium-mediated signaling"/>
    <property type="evidence" value="ECO:0000315"/>
    <property type="project" value="UniProtKB"/>
</dbReference>
<dbReference type="GO" id="GO:0007635">
    <property type="term" value="P:chemosensory behavior"/>
    <property type="evidence" value="ECO:0000315"/>
    <property type="project" value="UniProtKB"/>
</dbReference>
<dbReference type="GO" id="GO:0006935">
    <property type="term" value="P:chemotaxis"/>
    <property type="evidence" value="ECO:0000315"/>
    <property type="project" value="UniProtKB"/>
</dbReference>
<dbReference type="GO" id="GO:0040024">
    <property type="term" value="P:dauer larval development"/>
    <property type="evidence" value="ECO:0000316"/>
    <property type="project" value="WormBase"/>
</dbReference>
<dbReference type="GO" id="GO:0008340">
    <property type="term" value="P:determination of adult lifespan"/>
    <property type="evidence" value="ECO:0000315"/>
    <property type="project" value="WormBase"/>
</dbReference>
<dbReference type="GO" id="GO:0006897">
    <property type="term" value="P:endocytosis"/>
    <property type="evidence" value="ECO:0007669"/>
    <property type="project" value="UniProtKB-KW"/>
</dbReference>
<dbReference type="GO" id="GO:0006972">
    <property type="term" value="P:hyperosmotic response"/>
    <property type="evidence" value="ECO:0000315"/>
    <property type="project" value="WormBase"/>
</dbReference>
<dbReference type="GO" id="GO:0042048">
    <property type="term" value="P:olfactory behavior"/>
    <property type="evidence" value="ECO:0000315"/>
    <property type="project" value="WormBase"/>
</dbReference>
<dbReference type="GO" id="GO:0008355">
    <property type="term" value="P:olfactory learning"/>
    <property type="evidence" value="ECO:0000315"/>
    <property type="project" value="WormBase"/>
</dbReference>
<dbReference type="GO" id="GO:0097499">
    <property type="term" value="P:protein localization to non-motile cilium"/>
    <property type="evidence" value="ECO:0000315"/>
    <property type="project" value="WormBase"/>
</dbReference>
<dbReference type="GO" id="GO:0010468">
    <property type="term" value="P:regulation of gene expression"/>
    <property type="evidence" value="ECO:0000315"/>
    <property type="project" value="WormBase"/>
</dbReference>
<dbReference type="GO" id="GO:0010446">
    <property type="term" value="P:response to alkaline pH"/>
    <property type="evidence" value="ECO:0000315"/>
    <property type="project" value="UniProtKB"/>
</dbReference>
<dbReference type="GO" id="GO:0034606">
    <property type="term" value="P:response to hermaphrodite contact"/>
    <property type="evidence" value="ECO:0000315"/>
    <property type="project" value="WormBase"/>
</dbReference>
<dbReference type="GO" id="GO:0040040">
    <property type="term" value="P:thermosensory behavior"/>
    <property type="evidence" value="ECO:0000315"/>
    <property type="project" value="WormBase"/>
</dbReference>
<dbReference type="GO" id="GO:0043052">
    <property type="term" value="P:thermotaxis"/>
    <property type="evidence" value="ECO:0000315"/>
    <property type="project" value="WormBase"/>
</dbReference>
<dbReference type="GO" id="GO:0034608">
    <property type="term" value="P:vulval location"/>
    <property type="evidence" value="ECO:0000315"/>
    <property type="project" value="WormBase"/>
</dbReference>
<dbReference type="CDD" id="cd07416">
    <property type="entry name" value="MPP_PP2B"/>
    <property type="match status" value="1"/>
</dbReference>
<dbReference type="FunFam" id="3.60.21.10:FF:000002">
    <property type="entry name" value="Serine/threonine-protein phosphatase"/>
    <property type="match status" value="1"/>
</dbReference>
<dbReference type="Gene3D" id="3.60.21.10">
    <property type="match status" value="1"/>
</dbReference>
<dbReference type="InterPro" id="IPR004843">
    <property type="entry name" value="Calcineurin-like_PHP_ApaH"/>
</dbReference>
<dbReference type="InterPro" id="IPR029052">
    <property type="entry name" value="Metallo-depent_PP-like"/>
</dbReference>
<dbReference type="InterPro" id="IPR041751">
    <property type="entry name" value="MPP_PP2B"/>
</dbReference>
<dbReference type="InterPro" id="IPR043360">
    <property type="entry name" value="PP2B"/>
</dbReference>
<dbReference type="InterPro" id="IPR006186">
    <property type="entry name" value="Ser/Thr-sp_prot-phosphatase"/>
</dbReference>
<dbReference type="PANTHER" id="PTHR45673">
    <property type="entry name" value="SERINE/THREONINE-PROTEIN PHOSPHATASE 2B CATALYTIC SUBUNIT 1-RELATED"/>
    <property type="match status" value="1"/>
</dbReference>
<dbReference type="Pfam" id="PF00149">
    <property type="entry name" value="Metallophos"/>
    <property type="match status" value="1"/>
</dbReference>
<dbReference type="PRINTS" id="PR00114">
    <property type="entry name" value="STPHPHTASE"/>
</dbReference>
<dbReference type="SMART" id="SM00156">
    <property type="entry name" value="PP2Ac"/>
    <property type="match status" value="1"/>
</dbReference>
<dbReference type="SUPFAM" id="SSF56300">
    <property type="entry name" value="Metallo-dependent phosphatases"/>
    <property type="match status" value="1"/>
</dbReference>
<dbReference type="PROSITE" id="PS00125">
    <property type="entry name" value="SER_THR_PHOSPHATASE"/>
    <property type="match status" value="1"/>
</dbReference>
<gene>
    <name evidence="31" type="primary">tax-6</name>
    <name evidence="31" type="synonym">cna-1</name>
    <name evidence="31" type="ORF">C02F4.2</name>
</gene>
<sequence>MASTSAGQNSAAKPDTTNTTTTASNNNRERERDLKQFTERFVKTVQFPVSERLTVDQVYDRRTGKPRHEVLRDHFIKEGRIEEEAAIRVIQECSSLFRNEKTMLEIEAPVTVCGDIHGQFYDLMKLFEVGGSPATTKYLFLGDYVDRGYFSIECVLYLWALKICYPTTLFLLRGNHECRHLTEYFTFKQECKIKYSERVYDVCMESFDALPLAALMNQQFLCVHGGLSPEIHTLEDIRRIDRFKEPPAFGPMCDLLWSDPLEDFGNERNSEQFSHNSVRGCSYFYSYAACCDFLQHNNLLSIIRAHEAQDAGYRMYRKSQATGFPSLITIFSAPNYLDVYNNKAAILKYENNVMNIRQFNCSPHPYWLPNFMDVFTWSLPFVGEKVTEMLVHILNICSDDELMAECDDTFEGGVGSARKEVIRHKIRAIGKMARAFSVLRHESESVLQLKGLNAGGKLPQGALSEGRTGLNAAYRIEQSVAAESGCDSGHLIQSFEEARRLDKINERMPPTMATPPAQSPSQSPIPSRQTTPQPPQNGPSNS</sequence>
<comment type="function">
    <text evidence="7 8 9 10 11 12 13 14 16 18 19 20 21 22 23 24 25">Calcium-dependent, calmodulin-stimulated protein phosphatase (PubMed:12221132, PubMed:16481400, PubMed:22300764, PubMed:23805378). Dephosphorylates arrd-17 (PubMed:22300764). Dephosphorylates daf-16 at 'Ser-319' which regulates daf-16 nuclear translocation (PubMed:23805378). Dephosphorylates calcium permeable cation channel pkd-2 at 'Ser-534' (PubMed:16481400). Regulates male mating behavior including response to hermaphrodite contact and vulva location and localization of pkd-2 to neuronal cilium (PubMed:16481400). Negatively regulates several sensory behaviors including thermotaxis in ADF neurons, osmosensation in ASH neurons, olfaction adaptation in AWC neurons and sensitivity to CO2 levels (PubMed:11879652, PubMed:18524955). Plays a role in modulating temperature-dependent calcium responses in AFD neurons and together with tax-6 inhibitor rcan-1 regulates thermotaxis in AFD neurons (PubMed:26232604). Regulates expression of rcan-1 (PubMed:12684004). In response to changes in intracellular calcium levels may also regulate nuclear translocation of transcriptional regulators such as crtc-1 (PubMed:26232604). Plays a role in egg-laying, body-size, fertility, growth, movement and cuticle development (PubMed:12684004, PubMed:15522306, PubMed:17113567, PubMed:22300764, PubMed:27871170). Negatively regulates lifespan (PubMed:19279398). Promotes transcription activator crtc-1 nuclear localization, probably by dephosphorylating crtc-1 and thereby negatively regulates lifespan (PubMed:21331044). Regulates expression of chemoreceptor srt-2 in AWC neurons probably downstream of Ser/Thr kinase kin-29 (PubMed:17113567). Negatively regulates nicotinic acetylcholine receptor (nAChR) sensitivity to nicotine (PubMed:15990870). Plays a role in several endocytic processes including in coelomocyte endocytosis, intestine apical endocytosis and synaptic vesicle recycling (PubMed:20803083, PubMed:21345307). May negatively regulate excitatory GABA receptor exp-1 during enteric muscle contraction (PubMed:16084527). May negatively regulate autophagy (PubMed:19279398).</text>
</comment>
<comment type="catalytic activity">
    <reaction evidence="5 8 13 22 23">
        <text>O-phospho-L-seryl-[protein] + H2O = L-seryl-[protein] + phosphate</text>
        <dbReference type="Rhea" id="RHEA:20629"/>
        <dbReference type="Rhea" id="RHEA-COMP:9863"/>
        <dbReference type="Rhea" id="RHEA-COMP:11604"/>
        <dbReference type="ChEBI" id="CHEBI:15377"/>
        <dbReference type="ChEBI" id="CHEBI:29999"/>
        <dbReference type="ChEBI" id="CHEBI:43474"/>
        <dbReference type="ChEBI" id="CHEBI:83421"/>
        <dbReference type="EC" id="3.1.3.16"/>
    </reaction>
</comment>
<comment type="catalytic activity">
    <reaction evidence="5 8 13 22 23">
        <text>O-phospho-L-threonyl-[protein] + H2O = L-threonyl-[protein] + phosphate</text>
        <dbReference type="Rhea" id="RHEA:47004"/>
        <dbReference type="Rhea" id="RHEA-COMP:11060"/>
        <dbReference type="Rhea" id="RHEA-COMP:11605"/>
        <dbReference type="ChEBI" id="CHEBI:15377"/>
        <dbReference type="ChEBI" id="CHEBI:30013"/>
        <dbReference type="ChEBI" id="CHEBI:43474"/>
        <dbReference type="ChEBI" id="CHEBI:61977"/>
        <dbReference type="EC" id="3.1.3.16"/>
    </reaction>
</comment>
<comment type="cofactor">
    <cofactor evidence="4">
        <name>Fe(3+)</name>
        <dbReference type="ChEBI" id="CHEBI:29034"/>
    </cofactor>
    <text evidence="4">Binds 1 Fe(3+) ion per subunit.</text>
</comment>
<comment type="cofactor">
    <cofactor evidence="4">
        <name>Zn(2+)</name>
        <dbReference type="ChEBI" id="CHEBI:29105"/>
    </cofactor>
    <text evidence="4">Binds 1 zinc ion per subunit.</text>
</comment>
<comment type="activity regulation">
    <text evidence="1 8">Activated by Ca(2+)-bound calmodulin following an increase in intracellular Ca(2+) (By similarity). At low Ca(2+) concentrations, the catalytic subunit (also known as calcineurin A) is inactive and is bound to the regulatory subunit (also known as calcineurin B) in which only two high-affinity binding sites are occupied by Ca(2+) (PubMed:12221132). In response to elevated calcium levels, the occupancy of the low-affinity sites on calcineurin B by Ca(2+) causes a conformational change of the C-terminal regulatory domain of calcineurin A, resulting in the exposure of the calmodulin-binding domain and in the partial activation of calcineurin A (PubMed:12221132). The subsequent binding of Ca(2+)-bound calmodulin leads to the displacement of the autoinhibitory domain from the active site and possibly of the autoinhibitory segment from the substrate binding site which fully activates calcineurin A (By similarity). Inhibited by immunosuppressant cyclosporin A (CsA) (PubMed:12221132).</text>
</comment>
<comment type="subunit">
    <text evidence="1 8 9 12 14 15 17 19 22 23 24">Forms a complex composed of a calmodulin-dependent catalytic subunit tax-6 (also known as calcineurin A) and a regulatory Ca(2+)-binding subunit cnb-1 (also known as calcineurin B) (PubMed:12221132). In response to an increase in Ca(2+) intracellular levels, forms a complex composed of tax-6, cnb-1 and cmd-1/calmodulin (By similarity). Interacts with cmd-1/calmodulin in a Ca(2+)-dependent manner (PubMed:17854888). Interacts (via catalytic domain) with rcan-1; the interaction is calcium-dependent and inhibits tax-6 catalytic activity (PubMed:12684004, PubMed:26232604). Interacts with exp-1; the interaction is calcium and cnb-1-independent (PubMed:16084527). Interacts with arrd-17 (PubMed:22300764). Interacts with kin-29 (PubMed:17113567). Interacts with cnp-2 (PubMed:18593529). Interacts with daf-16 (PubMed:23805378). Interacts with dyn-1 (PubMed:20803083).</text>
</comment>
<comment type="interaction">
    <interactant intactId="EBI-323063">
        <id>Q0G819</id>
    </interactant>
    <interactant intactId="EBI-2893174">
        <id>Q21017</id>
        <label>kin-29</label>
    </interactant>
    <organismsDiffer>false</organismsDiffer>
    <experiments>3</experiments>
</comment>
<comment type="interaction">
    <interactant intactId="EBI-323063">
        <id>Q0G819</id>
    </interactant>
    <interactant intactId="EBI-323055">
        <id>P53806</id>
        <label>rcan-1</label>
    </interactant>
    <organismsDiffer>false</organismsDiffer>
    <experiments>5</experiments>
</comment>
<comment type="subcellular location">
    <subcellularLocation>
        <location evidence="8">Perikaryon</location>
    </subcellularLocation>
    <subcellularLocation>
        <location evidence="13">Cell projection</location>
        <location evidence="13">Cilium</location>
    </subcellularLocation>
    <subcellularLocation>
        <location evidence="8">Cytoplasm</location>
    </subcellularLocation>
</comment>
<comment type="subcellular location">
    <molecule>Isoform a</molecule>
    <subcellularLocation>
        <location evidence="7">Perikaryon</location>
    </subcellularLocation>
    <subcellularLocation>
        <location evidence="7">Cell projection</location>
        <location evidence="7">Dendrite</location>
    </subcellularLocation>
    <subcellularLocation>
        <location evidence="7">Cell projection</location>
        <location evidence="7">Axon</location>
    </subcellularLocation>
    <subcellularLocation>
        <location evidence="7">Cell projection</location>
        <location evidence="7">Cilium</location>
    </subcellularLocation>
    <subcellularLocation>
        <location evidence="7">Cytoplasm</location>
    </subcellularLocation>
</comment>
<comment type="alternative products">
    <event type="alternative splicing"/>
    <isoform>
        <id>Q0G819-1</id>
        <name evidence="31">c</name>
        <sequence type="displayed"/>
    </isoform>
    <isoform>
        <id>Q0G819-2</id>
        <name evidence="29">a</name>
        <sequence type="described" ref="VSP_058442 VSP_058443"/>
    </isoform>
    <isoform>
        <id>Q0G819-3</id>
        <name evidence="30">b</name>
        <sequence type="described" ref="VSP_058441 VSP_058444"/>
    </isoform>
</comment>
<comment type="tissue specificity">
    <text evidence="7 8 10 12 13">Expressed in head and tail neurons, ventral nerve cord, body wall and vulva muscles, sperm and spermatheca (PubMed:12221132). Expressed in hypodermal seam cells (PubMed:15522306). Expressed in intestinal and anal depressor muscles (PubMed:16084527). In male, expressed in CEM, HOB and ray RnB neurons (PubMed:16481400). Isoform a: Expressed in thermosensory ADF neurons, chemosensory ASE, AWA and AWC neurons, osmosensory ASH neurons and AIY and AIZ interneurons (PubMed:11879652). Expressed in body wall, vulva and pharyngeal muscles (PubMed:11879652).</text>
</comment>
<comment type="developmental stage">
    <text evidence="10">Expressed in embryos and at all larval stages.</text>
</comment>
<comment type="domain">
    <text evidence="3">The autoinhibitory domain prevents access to the catalytic site.</text>
</comment>
<comment type="domain">
    <text evidence="3">The autoinhibitory segment prevents access to the substrate binding site.</text>
</comment>
<comment type="domain">
    <text evidence="4">Possible isomerization of Pro-334 within the SAPNY motif triggers a conformation switch which affects the organization and thus accessibility of the active site and the substrate binding region (PxIxIF motif). The trans- to cis-transition may favor calcineurin A activation and substrate binding. The reverse cis- to trans-transition may be enhanced by peptidyl-prolyl isomerases such as PPIA.</text>
</comment>
<comment type="disruption phenotype">
    <text evidence="20 23 24 25">Shorter body length and reduced serotinin-induced egg laying as compared to wild-type (PubMed:27871170). Reduced calcium responses in AFD neurons upon a temperature increase from 16 to 20 degrees Celsius as compared to wild-type. At 17 degrees Celsius displays thermophilic behavior, preferentially migrating towards hotter regions (PubMed:26232604). RNAi-mediated knockdown results in an increase in lifespan (PubMed:21331044, PubMed:23805378). Also causes nuclear exclusion of crtc-1 (PubMed:21331044).</text>
</comment>
<comment type="similarity">
    <text evidence="26">Belongs to the PPP phosphatase family. PP-2B subfamily.</text>
</comment>
<evidence type="ECO:0000250" key="1">
    <source>
        <dbReference type="UniProtKB" id="P16298"/>
    </source>
</evidence>
<evidence type="ECO:0000250" key="2">
    <source>
        <dbReference type="UniProtKB" id="P36873"/>
    </source>
</evidence>
<evidence type="ECO:0000250" key="3">
    <source>
        <dbReference type="UniProtKB" id="P63328"/>
    </source>
</evidence>
<evidence type="ECO:0000250" key="4">
    <source>
        <dbReference type="UniProtKB" id="Q08209"/>
    </source>
</evidence>
<evidence type="ECO:0000255" key="5">
    <source>
        <dbReference type="RuleBase" id="RU004273"/>
    </source>
</evidence>
<evidence type="ECO:0000256" key="6">
    <source>
        <dbReference type="SAM" id="MobiDB-lite"/>
    </source>
</evidence>
<evidence type="ECO:0000269" key="7">
    <source>
    </source>
</evidence>
<evidence type="ECO:0000269" key="8">
    <source>
    </source>
</evidence>
<evidence type="ECO:0000269" key="9">
    <source>
    </source>
</evidence>
<evidence type="ECO:0000269" key="10">
    <source>
    </source>
</evidence>
<evidence type="ECO:0000269" key="11">
    <source>
    </source>
</evidence>
<evidence type="ECO:0000269" key="12">
    <source>
    </source>
</evidence>
<evidence type="ECO:0000269" key="13">
    <source>
    </source>
</evidence>
<evidence type="ECO:0000269" key="14">
    <source>
    </source>
</evidence>
<evidence type="ECO:0000269" key="15">
    <source>
    </source>
</evidence>
<evidence type="ECO:0000269" key="16">
    <source>
    </source>
</evidence>
<evidence type="ECO:0000269" key="17">
    <source>
    </source>
</evidence>
<evidence type="ECO:0000269" key="18">
    <source>
    </source>
</evidence>
<evidence type="ECO:0000269" key="19">
    <source>
    </source>
</evidence>
<evidence type="ECO:0000269" key="20">
    <source>
    </source>
</evidence>
<evidence type="ECO:0000269" key="21">
    <source>
    </source>
</evidence>
<evidence type="ECO:0000269" key="22">
    <source>
    </source>
</evidence>
<evidence type="ECO:0000269" key="23">
    <source>
    </source>
</evidence>
<evidence type="ECO:0000269" key="24">
    <source>
    </source>
</evidence>
<evidence type="ECO:0000269" key="25">
    <source>
    </source>
</evidence>
<evidence type="ECO:0000305" key="26"/>
<evidence type="ECO:0000305" key="27">
    <source>
    </source>
</evidence>
<evidence type="ECO:0000312" key="28">
    <source>
        <dbReference type="Proteomes" id="UP000001940"/>
    </source>
</evidence>
<evidence type="ECO:0000312" key="29">
    <source>
        <dbReference type="WormBase" id="C02F4.2a"/>
    </source>
</evidence>
<evidence type="ECO:0000312" key="30">
    <source>
        <dbReference type="WormBase" id="C02F4.2b"/>
    </source>
</evidence>
<evidence type="ECO:0000312" key="31">
    <source>
        <dbReference type="WormBase" id="C02F4.2c"/>
    </source>
</evidence>